<feature type="chain" id="PRO_0000061735" description="Cytochrome b">
    <location>
        <begin position="1" status="less than"/>
        <end position="145" status="greater than"/>
    </location>
</feature>
<feature type="transmembrane region" description="Helical" evidence="3">
    <location>
        <begin position="38"/>
        <end position="58"/>
    </location>
</feature>
<feature type="transmembrane region" description="Helical" evidence="3">
    <location>
        <begin position="85"/>
        <end position="105"/>
    </location>
</feature>
<feature type="binding site" description="axial binding residue" evidence="5">
    <location>
        <position position="42"/>
    </location>
    <ligand>
        <name>heme b</name>
        <dbReference type="ChEBI" id="CHEBI:60344"/>
        <label>b562</label>
    </ligand>
    <ligandPart>
        <name>Fe</name>
        <dbReference type="ChEBI" id="CHEBI:18248"/>
    </ligandPart>
</feature>
<feature type="binding site" description="axial binding residue" evidence="5">
    <location>
        <position position="56"/>
    </location>
    <ligand>
        <name>heme b</name>
        <dbReference type="ChEBI" id="CHEBI:60344"/>
        <label>b566</label>
    </ligand>
    <ligandPart>
        <name>Fe</name>
        <dbReference type="ChEBI" id="CHEBI:18248"/>
    </ligandPart>
</feature>
<feature type="binding site" evidence="2">
    <location>
        <position position="61"/>
    </location>
    <ligand>
        <name>a ubiquinone</name>
        <dbReference type="ChEBI" id="CHEBI:16389"/>
    </ligand>
</feature>
<feature type="non-terminal residue">
    <location>
        <position position="1"/>
    </location>
</feature>
<feature type="non-terminal residue">
    <location>
        <position position="145"/>
    </location>
</feature>
<sequence length="145" mass="16309">WGATVITNLMSAIPWIGQDIVEFIWGGFSVNNATLNRFFALHFLLPFVLAALALMHLIAMHDTVGSGNPLGISGNYDRLPFAPYFIFKDLVTIFIFFIVLSIFVFFMPNALGDSENYVMANPMQTPPAIVPEWYLLPFYAILRSI</sequence>
<evidence type="ECO:0000250" key="1"/>
<evidence type="ECO:0000250" key="2">
    <source>
        <dbReference type="UniProtKB" id="P00157"/>
    </source>
</evidence>
<evidence type="ECO:0000250" key="3">
    <source>
        <dbReference type="UniProtKB" id="P00163"/>
    </source>
</evidence>
<evidence type="ECO:0000255" key="4">
    <source>
        <dbReference type="PROSITE-ProRule" id="PRU00967"/>
    </source>
</evidence>
<evidence type="ECO:0000255" key="5">
    <source>
        <dbReference type="PROSITE-ProRule" id="PRU00968"/>
    </source>
</evidence>
<reference key="1">
    <citation type="journal article" date="1998" name="Med. Mycol.">
        <title>The identification and phylogenetic relationship of pathogenic species of Aspergillus based on the mitochondrial cytochrome b gene.</title>
        <authorList>
            <person name="Wang L."/>
            <person name="Yokoyama K."/>
            <person name="Miyaji M."/>
            <person name="Nishimura K."/>
        </authorList>
    </citation>
    <scope>NUCLEOTIDE SEQUENCE [GENOMIC DNA]</scope>
    <source>
        <strain>IFM 40603</strain>
        <strain>IFM 40800</strain>
        <strain>IFM 41087</strain>
        <strain>IFM 41933</strain>
        <strain>IFM 45909</strain>
        <strain>IFM 45910</strain>
        <strain>IFM 45911</strain>
        <strain>IFM 46870</strain>
        <strain>IFM 5364</strain>
        <strain>IFM 5366</strain>
    </source>
</reference>
<comment type="function">
    <text evidence="3">Component of the ubiquinol-cytochrome c reductase complex (complex III or cytochrome b-c1 complex) that is part of the mitochondrial respiratory chain. The b-c1 complex mediates electron transfer from ubiquinol to cytochrome c. Contributes to the generation of a proton gradient across the mitochondrial membrane that is then used for ATP synthesis.</text>
</comment>
<comment type="cofactor">
    <cofactor evidence="3">
        <name>heme b</name>
        <dbReference type="ChEBI" id="CHEBI:60344"/>
    </cofactor>
    <text evidence="3">Binds 2 heme b groups non-covalently.</text>
</comment>
<comment type="subunit">
    <text evidence="3">Fungal cytochrome b-c1 complex contains 10 subunits; 3 respiratory subunits, 2 core proteins and 5 low-molecular weight proteins. Cytochrome b-c1 complex is a homodimer.</text>
</comment>
<comment type="subcellular location">
    <subcellularLocation>
        <location evidence="3">Mitochondrion inner membrane</location>
        <topology evidence="3">Multi-pass membrane protein</topology>
    </subcellularLocation>
</comment>
<comment type="miscellaneous">
    <text evidence="1">Heme 1 (or BL or b562) is low-potential and absorbs at about 562 nm, and heme 2 (or BH or b566) is high-potential and absorbs at about 566 nm.</text>
</comment>
<comment type="similarity">
    <text evidence="4 5">Belongs to the cytochrome b family.</text>
</comment>
<comment type="caution">
    <text evidence="3">The protein contains only eight transmembrane helices, not nine as predicted by bioinformatics tools.</text>
</comment>
<gene>
    <name type="primary">cob</name>
    <name type="synonym">cytB</name>
</gene>
<geneLocation type="mitochondrion"/>
<protein>
    <recommendedName>
        <fullName>Cytochrome b</fullName>
    </recommendedName>
    <alternativeName>
        <fullName>Complex III subunit 3</fullName>
    </alternativeName>
    <alternativeName>
        <fullName>Complex III subunit III</fullName>
    </alternativeName>
    <alternativeName>
        <fullName>Cytochrome b-c1 complex subunit 3</fullName>
    </alternativeName>
    <alternativeName>
        <fullName>Ubiquinol-cytochrome-c reductase complex cytochrome b subunit</fullName>
    </alternativeName>
</protein>
<name>CYB_ASPFL</name>
<proteinExistence type="inferred from homology"/>
<accession>P56629</accession>
<organism>
    <name type="scientific">Aspergillus flavus</name>
    <dbReference type="NCBI Taxonomy" id="5059"/>
    <lineage>
        <taxon>Eukaryota</taxon>
        <taxon>Fungi</taxon>
        <taxon>Dikarya</taxon>
        <taxon>Ascomycota</taxon>
        <taxon>Pezizomycotina</taxon>
        <taxon>Eurotiomycetes</taxon>
        <taxon>Eurotiomycetidae</taxon>
        <taxon>Eurotiales</taxon>
        <taxon>Aspergillaceae</taxon>
        <taxon>Aspergillus</taxon>
        <taxon>Aspergillus subgen. Circumdati</taxon>
    </lineage>
</organism>
<dbReference type="EMBL" id="AB000568">
    <property type="protein sequence ID" value="BAA34135.1"/>
    <property type="molecule type" value="Genomic_DNA"/>
</dbReference>
<dbReference type="EMBL" id="AB000569">
    <property type="protein sequence ID" value="BAA34136.1"/>
    <property type="molecule type" value="Genomic_DNA"/>
</dbReference>
<dbReference type="EMBL" id="AB000570">
    <property type="protein sequence ID" value="BAA34137.1"/>
    <property type="molecule type" value="Genomic_DNA"/>
</dbReference>
<dbReference type="EMBL" id="AB000571">
    <property type="protein sequence ID" value="BAA34138.1"/>
    <property type="molecule type" value="Genomic_DNA"/>
</dbReference>
<dbReference type="EMBL" id="AB000572">
    <property type="protein sequence ID" value="BAA34139.1"/>
    <property type="molecule type" value="Genomic_DNA"/>
</dbReference>
<dbReference type="EMBL" id="AB000573">
    <property type="protein sequence ID" value="BAA34140.1"/>
    <property type="molecule type" value="Genomic_DNA"/>
</dbReference>
<dbReference type="EMBL" id="AB000574">
    <property type="protein sequence ID" value="BAA34141.2"/>
    <property type="molecule type" value="Genomic_DNA"/>
</dbReference>
<dbReference type="EMBL" id="AB000594">
    <property type="protein sequence ID" value="BAA34159.2"/>
    <property type="molecule type" value="Genomic_DNA"/>
</dbReference>
<dbReference type="EMBL" id="AB000595">
    <property type="protein sequence ID" value="BAA34160.2"/>
    <property type="molecule type" value="Genomic_DNA"/>
</dbReference>
<dbReference type="EMBL" id="AB000596">
    <property type="protein sequence ID" value="BAA34161.1"/>
    <property type="molecule type" value="Genomic_DNA"/>
</dbReference>
<dbReference type="SMR" id="P56629"/>
<dbReference type="GO" id="GO:0005743">
    <property type="term" value="C:mitochondrial inner membrane"/>
    <property type="evidence" value="ECO:0007669"/>
    <property type="project" value="UniProtKB-SubCell"/>
</dbReference>
<dbReference type="GO" id="GO:0046872">
    <property type="term" value="F:metal ion binding"/>
    <property type="evidence" value="ECO:0007669"/>
    <property type="project" value="UniProtKB-KW"/>
</dbReference>
<dbReference type="GO" id="GO:0008121">
    <property type="term" value="F:ubiquinol-cytochrome-c reductase activity"/>
    <property type="evidence" value="ECO:0007669"/>
    <property type="project" value="TreeGrafter"/>
</dbReference>
<dbReference type="GO" id="GO:0006122">
    <property type="term" value="P:mitochondrial electron transport, ubiquinol to cytochrome c"/>
    <property type="evidence" value="ECO:0007669"/>
    <property type="project" value="TreeGrafter"/>
</dbReference>
<dbReference type="Gene3D" id="1.20.810.10">
    <property type="entry name" value="Cytochrome Bc1 Complex, Chain C"/>
    <property type="match status" value="1"/>
</dbReference>
<dbReference type="InterPro" id="IPR005798">
    <property type="entry name" value="Cyt_b/b6_C"/>
</dbReference>
<dbReference type="InterPro" id="IPR036150">
    <property type="entry name" value="Cyt_b/b6_C_sf"/>
</dbReference>
<dbReference type="InterPro" id="IPR005797">
    <property type="entry name" value="Cyt_b/b6_N"/>
</dbReference>
<dbReference type="InterPro" id="IPR027387">
    <property type="entry name" value="Cytb/b6-like_sf"/>
</dbReference>
<dbReference type="InterPro" id="IPR016174">
    <property type="entry name" value="Di-haem_cyt_TM"/>
</dbReference>
<dbReference type="PANTHER" id="PTHR19271">
    <property type="entry name" value="CYTOCHROME B"/>
    <property type="match status" value="1"/>
</dbReference>
<dbReference type="PANTHER" id="PTHR19271:SF16">
    <property type="entry name" value="CYTOCHROME B"/>
    <property type="match status" value="1"/>
</dbReference>
<dbReference type="Pfam" id="PF00032">
    <property type="entry name" value="Cytochrom_B_C"/>
    <property type="match status" value="1"/>
</dbReference>
<dbReference type="Pfam" id="PF00033">
    <property type="entry name" value="Cytochrome_B"/>
    <property type="match status" value="1"/>
</dbReference>
<dbReference type="SUPFAM" id="SSF81648">
    <property type="entry name" value="a domain/subunit of cytochrome bc1 complex (Ubiquinol-cytochrome c reductase)"/>
    <property type="match status" value="1"/>
</dbReference>
<dbReference type="SUPFAM" id="SSF81342">
    <property type="entry name" value="Transmembrane di-heme cytochromes"/>
    <property type="match status" value="1"/>
</dbReference>
<dbReference type="PROSITE" id="PS51003">
    <property type="entry name" value="CYTB_CTER"/>
    <property type="match status" value="1"/>
</dbReference>
<dbReference type="PROSITE" id="PS51002">
    <property type="entry name" value="CYTB_NTER"/>
    <property type="match status" value="1"/>
</dbReference>
<keyword id="KW-0249">Electron transport</keyword>
<keyword id="KW-0349">Heme</keyword>
<keyword id="KW-0408">Iron</keyword>
<keyword id="KW-0472">Membrane</keyword>
<keyword id="KW-0479">Metal-binding</keyword>
<keyword id="KW-0496">Mitochondrion</keyword>
<keyword id="KW-0999">Mitochondrion inner membrane</keyword>
<keyword id="KW-0679">Respiratory chain</keyword>
<keyword id="KW-0812">Transmembrane</keyword>
<keyword id="KW-1133">Transmembrane helix</keyword>
<keyword id="KW-0813">Transport</keyword>
<keyword id="KW-0830">Ubiquinone</keyword>